<accession>B1VNY5</accession>
<organism>
    <name type="scientific">Streptomyces griseus subsp. griseus (strain JCM 4626 / CBS 651.72 / NBRC 13350 / KCC S-0626 / ISP 5235)</name>
    <dbReference type="NCBI Taxonomy" id="455632"/>
    <lineage>
        <taxon>Bacteria</taxon>
        <taxon>Bacillati</taxon>
        <taxon>Actinomycetota</taxon>
        <taxon>Actinomycetes</taxon>
        <taxon>Kitasatosporales</taxon>
        <taxon>Streptomycetaceae</taxon>
        <taxon>Streptomyces</taxon>
    </lineage>
</organism>
<keyword id="KW-0021">Allosteric enzyme</keyword>
<keyword id="KW-0328">Glycosyltransferase</keyword>
<keyword id="KW-0342">GTP-binding</keyword>
<keyword id="KW-0460">Magnesium</keyword>
<keyword id="KW-0547">Nucleotide-binding</keyword>
<keyword id="KW-0808">Transferase</keyword>
<reference key="1">
    <citation type="journal article" date="2008" name="J. Bacteriol.">
        <title>Genome sequence of the streptomycin-producing microorganism Streptomyces griseus IFO 13350.</title>
        <authorList>
            <person name="Ohnishi Y."/>
            <person name="Ishikawa J."/>
            <person name="Hara H."/>
            <person name="Suzuki H."/>
            <person name="Ikenoya M."/>
            <person name="Ikeda H."/>
            <person name="Yamashita A."/>
            <person name="Hattori M."/>
            <person name="Horinouchi S."/>
        </authorList>
    </citation>
    <scope>NUCLEOTIDE SEQUENCE [LARGE SCALE GENOMIC DNA]</scope>
    <source>
        <strain>JCM 4626 / CBS 651.72 / NBRC 13350 / KCC S-0626 / ISP 5235</strain>
    </source>
</reference>
<dbReference type="EC" id="2.4.2.9" evidence="1"/>
<dbReference type="EMBL" id="AP009493">
    <property type="protein sequence ID" value="BAG20364.1"/>
    <property type="molecule type" value="Genomic_DNA"/>
</dbReference>
<dbReference type="RefSeq" id="WP_003967679.1">
    <property type="nucleotide sequence ID" value="NC_010572.1"/>
</dbReference>
<dbReference type="SMR" id="B1VNY5"/>
<dbReference type="KEGG" id="sgr:SGR_3535"/>
<dbReference type="eggNOG" id="COG0035">
    <property type="taxonomic scope" value="Bacteria"/>
</dbReference>
<dbReference type="HOGENOM" id="CLU_067096_2_3_11"/>
<dbReference type="UniPathway" id="UPA00574">
    <property type="reaction ID" value="UER00636"/>
</dbReference>
<dbReference type="Proteomes" id="UP000001685">
    <property type="component" value="Chromosome"/>
</dbReference>
<dbReference type="GO" id="GO:0005525">
    <property type="term" value="F:GTP binding"/>
    <property type="evidence" value="ECO:0007669"/>
    <property type="project" value="UniProtKB-KW"/>
</dbReference>
<dbReference type="GO" id="GO:0000287">
    <property type="term" value="F:magnesium ion binding"/>
    <property type="evidence" value="ECO:0007669"/>
    <property type="project" value="UniProtKB-UniRule"/>
</dbReference>
<dbReference type="GO" id="GO:0004845">
    <property type="term" value="F:uracil phosphoribosyltransferase activity"/>
    <property type="evidence" value="ECO:0007669"/>
    <property type="project" value="UniProtKB-UniRule"/>
</dbReference>
<dbReference type="GO" id="GO:0044206">
    <property type="term" value="P:UMP salvage"/>
    <property type="evidence" value="ECO:0007669"/>
    <property type="project" value="UniProtKB-UniRule"/>
</dbReference>
<dbReference type="GO" id="GO:0006223">
    <property type="term" value="P:uracil salvage"/>
    <property type="evidence" value="ECO:0007669"/>
    <property type="project" value="InterPro"/>
</dbReference>
<dbReference type="CDD" id="cd06223">
    <property type="entry name" value="PRTases_typeI"/>
    <property type="match status" value="1"/>
</dbReference>
<dbReference type="FunFam" id="3.40.50.2020:FF:000003">
    <property type="entry name" value="Uracil phosphoribosyltransferase"/>
    <property type="match status" value="1"/>
</dbReference>
<dbReference type="Gene3D" id="3.40.50.2020">
    <property type="match status" value="1"/>
</dbReference>
<dbReference type="HAMAP" id="MF_01218_B">
    <property type="entry name" value="Upp_B"/>
    <property type="match status" value="1"/>
</dbReference>
<dbReference type="InterPro" id="IPR000836">
    <property type="entry name" value="PRibTrfase_dom"/>
</dbReference>
<dbReference type="InterPro" id="IPR029057">
    <property type="entry name" value="PRTase-like"/>
</dbReference>
<dbReference type="InterPro" id="IPR034332">
    <property type="entry name" value="Upp_B"/>
</dbReference>
<dbReference type="InterPro" id="IPR050054">
    <property type="entry name" value="UPRTase/APRTase"/>
</dbReference>
<dbReference type="InterPro" id="IPR005765">
    <property type="entry name" value="Ura_phspho_trans"/>
</dbReference>
<dbReference type="NCBIfam" id="NF001097">
    <property type="entry name" value="PRK00129.1"/>
    <property type="match status" value="1"/>
</dbReference>
<dbReference type="NCBIfam" id="TIGR01091">
    <property type="entry name" value="upp"/>
    <property type="match status" value="1"/>
</dbReference>
<dbReference type="PANTHER" id="PTHR32315">
    <property type="entry name" value="ADENINE PHOSPHORIBOSYLTRANSFERASE"/>
    <property type="match status" value="1"/>
</dbReference>
<dbReference type="PANTHER" id="PTHR32315:SF4">
    <property type="entry name" value="URACIL PHOSPHORIBOSYLTRANSFERASE, CHLOROPLASTIC"/>
    <property type="match status" value="1"/>
</dbReference>
<dbReference type="Pfam" id="PF14681">
    <property type="entry name" value="UPRTase"/>
    <property type="match status" value="1"/>
</dbReference>
<dbReference type="SUPFAM" id="SSF53271">
    <property type="entry name" value="PRTase-like"/>
    <property type="match status" value="1"/>
</dbReference>
<protein>
    <recommendedName>
        <fullName evidence="1">Uracil phosphoribosyltransferase</fullName>
        <ecNumber evidence="1">2.4.2.9</ecNumber>
    </recommendedName>
    <alternativeName>
        <fullName evidence="1">UMP pyrophosphorylase</fullName>
    </alternativeName>
    <alternativeName>
        <fullName evidence="1">UPRTase</fullName>
    </alternativeName>
</protein>
<name>UPP_STRGG</name>
<proteinExistence type="inferred from homology"/>
<comment type="function">
    <text evidence="1">Catalyzes the conversion of uracil and 5-phospho-alpha-D-ribose 1-diphosphate (PRPP) to UMP and diphosphate.</text>
</comment>
<comment type="catalytic activity">
    <reaction evidence="1">
        <text>UMP + diphosphate = 5-phospho-alpha-D-ribose 1-diphosphate + uracil</text>
        <dbReference type="Rhea" id="RHEA:13017"/>
        <dbReference type="ChEBI" id="CHEBI:17568"/>
        <dbReference type="ChEBI" id="CHEBI:33019"/>
        <dbReference type="ChEBI" id="CHEBI:57865"/>
        <dbReference type="ChEBI" id="CHEBI:58017"/>
        <dbReference type="EC" id="2.4.2.9"/>
    </reaction>
</comment>
<comment type="cofactor">
    <cofactor evidence="1">
        <name>Mg(2+)</name>
        <dbReference type="ChEBI" id="CHEBI:18420"/>
    </cofactor>
    <text evidence="1">Binds 1 Mg(2+) ion per subunit. The magnesium is bound as Mg-PRPP.</text>
</comment>
<comment type="activity regulation">
    <text evidence="1">Allosterically activated by GTP.</text>
</comment>
<comment type="pathway">
    <text evidence="1">Pyrimidine metabolism; UMP biosynthesis via salvage pathway; UMP from uracil: step 1/1.</text>
</comment>
<comment type="similarity">
    <text evidence="1">Belongs to the UPRTase family.</text>
</comment>
<evidence type="ECO:0000255" key="1">
    <source>
        <dbReference type="HAMAP-Rule" id="MF_01218"/>
    </source>
</evidence>
<feature type="chain" id="PRO_1000139166" description="Uracil phosphoribosyltransferase">
    <location>
        <begin position="1"/>
        <end position="211"/>
    </location>
</feature>
<feature type="binding site" evidence="1">
    <location>
        <position position="78"/>
    </location>
    <ligand>
        <name>5-phospho-alpha-D-ribose 1-diphosphate</name>
        <dbReference type="ChEBI" id="CHEBI:58017"/>
    </ligand>
</feature>
<feature type="binding site" evidence="1">
    <location>
        <position position="103"/>
    </location>
    <ligand>
        <name>5-phospho-alpha-D-ribose 1-diphosphate</name>
        <dbReference type="ChEBI" id="CHEBI:58017"/>
    </ligand>
</feature>
<feature type="binding site" evidence="1">
    <location>
        <begin position="130"/>
        <end position="138"/>
    </location>
    <ligand>
        <name>5-phospho-alpha-D-ribose 1-diphosphate</name>
        <dbReference type="ChEBI" id="CHEBI:58017"/>
    </ligand>
</feature>
<feature type="binding site" evidence="1">
    <location>
        <position position="195"/>
    </location>
    <ligand>
        <name>uracil</name>
        <dbReference type="ChEBI" id="CHEBI:17568"/>
    </ligand>
</feature>
<feature type="binding site" evidence="1">
    <location>
        <begin position="200"/>
        <end position="202"/>
    </location>
    <ligand>
        <name>uracil</name>
        <dbReference type="ChEBI" id="CHEBI:17568"/>
    </ligand>
</feature>
<feature type="binding site" evidence="1">
    <location>
        <position position="201"/>
    </location>
    <ligand>
        <name>5-phospho-alpha-D-ribose 1-diphosphate</name>
        <dbReference type="ChEBI" id="CHEBI:58017"/>
    </ligand>
</feature>
<sequence>MRIHVVDHPLVAHKLTTLRDKRTDSPTFRRLADELVTLLAYEATRDVRTELVDIETPVTPTTGVKLSHPRPLVVPILRAGLGMLDGMVRLLPTAEVGFLGMIRNEETLKAETYATRMPEDLSGRQVYVLDPMLATGGTLVAAIRELIERGADDVTAVVLLAAPEGVEVMERELAGTPVTVVTASVDERLNENGYIVPGLGDAGDRMYGTAE</sequence>
<gene>
    <name evidence="1" type="primary">upp</name>
    <name type="ordered locus">SGR_3535</name>
</gene>